<comment type="function">
    <text evidence="2">Component of the acetyl coenzyme A carboxylase (ACC) complex. Biotin carboxylase (BC) catalyzes the carboxylation of biotin on its carrier protein (BCCP) and then the CO(2) group is transferred by the transcarboxylase to acetyl-CoA to form malonyl-CoA.</text>
</comment>
<comment type="catalytic activity">
    <reaction evidence="2">
        <text>N(6)-carboxybiotinyl-L-lysyl-[protein] + acetyl-CoA = N(6)-biotinyl-L-lysyl-[protein] + malonyl-CoA</text>
        <dbReference type="Rhea" id="RHEA:54728"/>
        <dbReference type="Rhea" id="RHEA-COMP:10505"/>
        <dbReference type="Rhea" id="RHEA-COMP:10506"/>
        <dbReference type="ChEBI" id="CHEBI:57288"/>
        <dbReference type="ChEBI" id="CHEBI:57384"/>
        <dbReference type="ChEBI" id="CHEBI:83144"/>
        <dbReference type="ChEBI" id="CHEBI:83145"/>
        <dbReference type="EC" id="2.1.3.15"/>
    </reaction>
</comment>
<comment type="cofactor">
    <cofactor evidence="2">
        <name>Zn(2+)</name>
        <dbReference type="ChEBI" id="CHEBI:29105"/>
    </cofactor>
    <text evidence="2">Binds 1 zinc ion per subunit.</text>
</comment>
<comment type="pathway">
    <text evidence="2">Lipid metabolism; malonyl-CoA biosynthesis; malonyl-CoA from acetyl-CoA: step 1/1.</text>
</comment>
<comment type="subunit">
    <text evidence="1">Acetyl-CoA carboxylase is a heterohexamer composed of biotin carboxyl carrier protein, biotin carboxylase and 2 subunits each of ACCase subunit alpha and ACCase plastid-coded subunit beta (accD).</text>
</comment>
<comment type="subcellular location">
    <subcellularLocation>
        <location evidence="2">Plastid</location>
        <location evidence="2">Chloroplast stroma</location>
    </subcellularLocation>
</comment>
<comment type="similarity">
    <text evidence="2">Belongs to the AccD/PCCB family.</text>
</comment>
<name>ACCD_CYACA</name>
<geneLocation type="chloroplast"/>
<dbReference type="EC" id="2.1.3.15" evidence="2"/>
<dbReference type="EMBL" id="AF022186">
    <property type="protein sequence ID" value="AAF12939.1"/>
    <property type="molecule type" value="Genomic_DNA"/>
</dbReference>
<dbReference type="RefSeq" id="NP_045155.1">
    <property type="nucleotide sequence ID" value="NC_001840.1"/>
</dbReference>
<dbReference type="SMR" id="Q9TLW3"/>
<dbReference type="GeneID" id="800114"/>
<dbReference type="UniPathway" id="UPA00655">
    <property type="reaction ID" value="UER00711"/>
</dbReference>
<dbReference type="GO" id="GO:0009317">
    <property type="term" value="C:acetyl-CoA carboxylase complex"/>
    <property type="evidence" value="ECO:0007669"/>
    <property type="project" value="InterPro"/>
</dbReference>
<dbReference type="GO" id="GO:0009570">
    <property type="term" value="C:chloroplast stroma"/>
    <property type="evidence" value="ECO:0007669"/>
    <property type="project" value="UniProtKB-SubCell"/>
</dbReference>
<dbReference type="GO" id="GO:0003989">
    <property type="term" value="F:acetyl-CoA carboxylase activity"/>
    <property type="evidence" value="ECO:0007669"/>
    <property type="project" value="InterPro"/>
</dbReference>
<dbReference type="GO" id="GO:0005524">
    <property type="term" value="F:ATP binding"/>
    <property type="evidence" value="ECO:0007669"/>
    <property type="project" value="UniProtKB-KW"/>
</dbReference>
<dbReference type="GO" id="GO:0016743">
    <property type="term" value="F:carboxyl- or carbamoyltransferase activity"/>
    <property type="evidence" value="ECO:0007669"/>
    <property type="project" value="UniProtKB-UniRule"/>
</dbReference>
<dbReference type="GO" id="GO:0008270">
    <property type="term" value="F:zinc ion binding"/>
    <property type="evidence" value="ECO:0007669"/>
    <property type="project" value="UniProtKB-UniRule"/>
</dbReference>
<dbReference type="GO" id="GO:0006633">
    <property type="term" value="P:fatty acid biosynthetic process"/>
    <property type="evidence" value="ECO:0007669"/>
    <property type="project" value="UniProtKB-KW"/>
</dbReference>
<dbReference type="GO" id="GO:2001295">
    <property type="term" value="P:malonyl-CoA biosynthetic process"/>
    <property type="evidence" value="ECO:0007669"/>
    <property type="project" value="UniProtKB-UniRule"/>
</dbReference>
<dbReference type="Gene3D" id="3.90.226.10">
    <property type="entry name" value="2-enoyl-CoA Hydratase, Chain A, domain 1"/>
    <property type="match status" value="1"/>
</dbReference>
<dbReference type="HAMAP" id="MF_01395">
    <property type="entry name" value="AcetylCoA_CT_beta"/>
    <property type="match status" value="1"/>
</dbReference>
<dbReference type="InterPro" id="IPR034733">
    <property type="entry name" value="AcCoA_carboxyl_beta"/>
</dbReference>
<dbReference type="InterPro" id="IPR000438">
    <property type="entry name" value="Acetyl_CoA_COase_Trfase_b_su"/>
</dbReference>
<dbReference type="InterPro" id="IPR029045">
    <property type="entry name" value="ClpP/crotonase-like_dom_sf"/>
</dbReference>
<dbReference type="InterPro" id="IPR011762">
    <property type="entry name" value="COA_CT_N"/>
</dbReference>
<dbReference type="NCBIfam" id="TIGR00515">
    <property type="entry name" value="accD"/>
    <property type="match status" value="1"/>
</dbReference>
<dbReference type="PANTHER" id="PTHR42995">
    <property type="entry name" value="ACETYL-COENZYME A CARBOXYLASE CARBOXYL TRANSFERASE SUBUNIT BETA, CHLOROPLASTIC"/>
    <property type="match status" value="1"/>
</dbReference>
<dbReference type="PANTHER" id="PTHR42995:SF5">
    <property type="entry name" value="ACETYL-COENZYME A CARBOXYLASE CARBOXYL TRANSFERASE SUBUNIT BETA, CHLOROPLASTIC"/>
    <property type="match status" value="1"/>
</dbReference>
<dbReference type="Pfam" id="PF01039">
    <property type="entry name" value="Carboxyl_trans"/>
    <property type="match status" value="1"/>
</dbReference>
<dbReference type="PRINTS" id="PR01070">
    <property type="entry name" value="ACCCTRFRASEB"/>
</dbReference>
<dbReference type="SUPFAM" id="SSF52096">
    <property type="entry name" value="ClpP/crotonase"/>
    <property type="match status" value="1"/>
</dbReference>
<dbReference type="PROSITE" id="PS50980">
    <property type="entry name" value="COA_CT_NTER"/>
    <property type="match status" value="1"/>
</dbReference>
<protein>
    <recommendedName>
        <fullName evidence="2">Acetyl-coenzyme A carboxylase carboxyl transferase subunit beta, chloroplastic</fullName>
        <shortName evidence="2">ACCase subunit beta</shortName>
        <shortName evidence="2">Acetyl-CoA carboxylase carboxyltransferase subunit beta</shortName>
        <ecNumber evidence="2">2.1.3.15</ecNumber>
    </recommendedName>
</protein>
<reference key="1">
    <citation type="journal article" date="2000" name="J. Mol. Evol.">
        <title>The structure and gene repertoire of an ancient red algal plastid genome.</title>
        <authorList>
            <person name="Gloeckner G."/>
            <person name="Rosenthal A."/>
            <person name="Valentin K.-U."/>
        </authorList>
    </citation>
    <scope>NUCLEOTIDE SEQUENCE [LARGE SCALE GENOMIC DNA]</scope>
    <source>
        <strain>RK-1</strain>
    </source>
</reference>
<gene>
    <name evidence="2" type="primary">accD</name>
</gene>
<proteinExistence type="inferred from homology"/>
<accession>Q9TLW3</accession>
<evidence type="ECO:0000250" key="1"/>
<evidence type="ECO:0000255" key="2">
    <source>
        <dbReference type="HAMAP-Rule" id="MF_01395"/>
    </source>
</evidence>
<evidence type="ECO:0000255" key="3">
    <source>
        <dbReference type="PROSITE-ProRule" id="PRU01136"/>
    </source>
</evidence>
<keyword id="KW-0067">ATP-binding</keyword>
<keyword id="KW-0150">Chloroplast</keyword>
<keyword id="KW-0275">Fatty acid biosynthesis</keyword>
<keyword id="KW-0276">Fatty acid metabolism</keyword>
<keyword id="KW-0444">Lipid biosynthesis</keyword>
<keyword id="KW-0443">Lipid metabolism</keyword>
<keyword id="KW-0479">Metal-binding</keyword>
<keyword id="KW-0547">Nucleotide-binding</keyword>
<keyword id="KW-0934">Plastid</keyword>
<keyword id="KW-0808">Transferase</keyword>
<keyword id="KW-0862">Zinc</keyword>
<keyword id="KW-0863">Zinc-finger</keyword>
<sequence>MPNGTKLAKSFLWKKCDSCNILISKFDFYKHDKVCPECNYHFPMYSSERINHIIDLKSWIPLYNNLLSGDPLGFCDKKPYITRLAENQKITGLDEAVQTGIGRINNISASVAVMDFNFMGGSMGSAVGEKITRLVEFSTKEELPIVIISASGGARMQEGILSLMQMAKISAALERLQSKGLLYISILSSPTTGGVFASFAMLGDIILAEPKAVVGFAGKRVVEQTLNEKLPPNFQSAEYLLDNGFVDLIVKRKQLKKTIHMILDLHN</sequence>
<organism>
    <name type="scientific">Cyanidium caldarium</name>
    <name type="common">Red alga</name>
    <dbReference type="NCBI Taxonomy" id="2771"/>
    <lineage>
        <taxon>Eukaryota</taxon>
        <taxon>Rhodophyta</taxon>
        <taxon>Bangiophyceae</taxon>
        <taxon>Cyanidiales</taxon>
        <taxon>Cyanidiaceae</taxon>
        <taxon>Cyanidium</taxon>
    </lineage>
</organism>
<feature type="chain" id="PRO_0000389904" description="Acetyl-coenzyme A carboxylase carboxyl transferase subunit beta, chloroplastic">
    <location>
        <begin position="1"/>
        <end position="267"/>
    </location>
</feature>
<feature type="domain" description="CoA carboxyltransferase N-terminal" evidence="3">
    <location>
        <begin position="12"/>
        <end position="267"/>
    </location>
</feature>
<feature type="zinc finger region" description="C4-type" evidence="2">
    <location>
        <begin position="16"/>
        <end position="38"/>
    </location>
</feature>
<feature type="binding site" evidence="2">
    <location>
        <position position="16"/>
    </location>
    <ligand>
        <name>Zn(2+)</name>
        <dbReference type="ChEBI" id="CHEBI:29105"/>
    </ligand>
</feature>
<feature type="binding site" evidence="2">
    <location>
        <position position="19"/>
    </location>
    <ligand>
        <name>Zn(2+)</name>
        <dbReference type="ChEBI" id="CHEBI:29105"/>
    </ligand>
</feature>
<feature type="binding site" evidence="2">
    <location>
        <position position="35"/>
    </location>
    <ligand>
        <name>Zn(2+)</name>
        <dbReference type="ChEBI" id="CHEBI:29105"/>
    </ligand>
</feature>
<feature type="binding site" evidence="2">
    <location>
        <position position="38"/>
    </location>
    <ligand>
        <name>Zn(2+)</name>
        <dbReference type="ChEBI" id="CHEBI:29105"/>
    </ligand>
</feature>